<organism>
    <name type="scientific">Bunyavirus La Crosse (isolate Human/United States/L78/1978)</name>
    <dbReference type="NCBI Taxonomy" id="796210"/>
    <lineage>
        <taxon>Viruses</taxon>
        <taxon>Riboviria</taxon>
        <taxon>Orthornavirae</taxon>
        <taxon>Negarnaviricota</taxon>
        <taxon>Polyploviricotina</taxon>
        <taxon>Ellioviricetes</taxon>
        <taxon>Bunyavirales</taxon>
        <taxon>Peribunyaviridae</taxon>
        <taxon>Orthobunyavirus</taxon>
        <taxon>Orthobunyavirus lacrosseense</taxon>
    </lineage>
</organism>
<accession>Q8JPR1</accession>
<feature type="signal peptide" evidence="2">
    <location>
        <begin position="1"/>
        <end position="13"/>
    </location>
</feature>
<feature type="chain" id="PRO_0000397205" description="Envelopment polyprotein">
    <location>
        <begin position="14"/>
        <end position="1441"/>
    </location>
</feature>
<feature type="chain" id="PRO_0000397184" description="Glycoprotein N" evidence="1">
    <location>
        <begin position="14"/>
        <end position="299"/>
    </location>
</feature>
<feature type="chain" id="PRO_0000397185" description="Non-structural protein M" evidence="1">
    <location>
        <begin position="300"/>
        <end position="473"/>
    </location>
</feature>
<feature type="chain" id="PRO_0000397186" description="Glycoprotein C" evidence="1">
    <location>
        <begin position="474"/>
        <end position="1441"/>
    </location>
</feature>
<feature type="topological domain" description="Lumenal" evidence="2">
    <location>
        <begin position="14"/>
        <end position="200"/>
    </location>
</feature>
<feature type="transmembrane region" evidence="2">
    <location>
        <begin position="201"/>
        <end position="221"/>
    </location>
</feature>
<feature type="topological domain" description="Cytoplasmic" evidence="2">
    <location>
        <begin position="222"/>
        <end position="305"/>
    </location>
</feature>
<feature type="transmembrane region" evidence="2">
    <location>
        <begin position="306"/>
        <end position="326"/>
    </location>
</feature>
<feature type="topological domain" description="Lumenal" evidence="2">
    <location>
        <begin position="327"/>
        <end position="361"/>
    </location>
</feature>
<feature type="transmembrane region" evidence="2">
    <location>
        <begin position="362"/>
        <end position="382"/>
    </location>
</feature>
<feature type="topological domain" description="Cytoplasmic" evidence="2">
    <location>
        <begin position="383"/>
        <end position="450"/>
    </location>
</feature>
<feature type="transmembrane region" evidence="2">
    <location>
        <begin position="451"/>
        <end position="471"/>
    </location>
</feature>
<feature type="topological domain" description="Lumenal" evidence="2">
    <location>
        <begin position="472"/>
        <end position="1395"/>
    </location>
</feature>
<feature type="transmembrane region" evidence="2">
    <location>
        <begin position="1396"/>
        <end position="1416"/>
    </location>
</feature>
<feature type="topological domain" description="Cytoplasmic" evidence="2">
    <location>
        <begin position="1417"/>
        <end position="1433"/>
    </location>
</feature>
<feature type="region of interest" description="Fusion peptide" evidence="2">
    <location>
        <begin position="1066"/>
        <end position="1087"/>
    </location>
</feature>
<feature type="glycosylation site" description="N-linked (GlcNAc...) asparagine; by host" evidence="2">
    <location>
        <position position="57"/>
    </location>
</feature>
<feature type="glycosylation site" description="N-linked (GlcNAc...) asparagine; by host" evidence="2">
    <location>
        <position position="490"/>
    </location>
</feature>
<feature type="glycosylation site" description="N-linked (GlcNAc...) asparagine; by host" evidence="2">
    <location>
        <position position="1177"/>
    </location>
</feature>
<feature type="mutagenesis site" description="Complete loss of viral fusion and entry." evidence="3">
    <original>W</original>
    <variation>A</variation>
    <location>
        <position position="1066"/>
    </location>
</feature>
<feature type="helix" evidence="5">
    <location>
        <begin position="478"/>
        <end position="483"/>
    </location>
</feature>
<feature type="helix" evidence="5">
    <location>
        <begin position="489"/>
        <end position="491"/>
    </location>
</feature>
<feature type="helix" evidence="5">
    <location>
        <begin position="493"/>
        <end position="495"/>
    </location>
</feature>
<feature type="helix" evidence="5">
    <location>
        <begin position="503"/>
        <end position="507"/>
    </location>
</feature>
<feature type="helix" evidence="5">
    <location>
        <begin position="510"/>
        <end position="519"/>
    </location>
</feature>
<feature type="helix" evidence="5">
    <location>
        <begin position="525"/>
        <end position="527"/>
    </location>
</feature>
<feature type="helix" evidence="5">
    <location>
        <begin position="528"/>
        <end position="532"/>
    </location>
</feature>
<feature type="helix" evidence="5">
    <location>
        <begin position="538"/>
        <end position="547"/>
    </location>
</feature>
<feature type="helix" evidence="5">
    <location>
        <begin position="551"/>
        <end position="564"/>
    </location>
</feature>
<feature type="turn" evidence="5">
    <location>
        <begin position="566"/>
        <end position="569"/>
    </location>
</feature>
<feature type="helix" evidence="5">
    <location>
        <begin position="570"/>
        <end position="573"/>
    </location>
</feature>
<feature type="helix" evidence="5">
    <location>
        <begin position="578"/>
        <end position="580"/>
    </location>
</feature>
<feature type="helix" evidence="5">
    <location>
        <begin position="581"/>
        <end position="589"/>
    </location>
</feature>
<feature type="helix" evidence="5">
    <location>
        <begin position="593"/>
        <end position="597"/>
    </location>
</feature>
<feature type="helix" evidence="5">
    <location>
        <begin position="602"/>
        <end position="609"/>
    </location>
</feature>
<feature type="helix" evidence="5">
    <location>
        <begin position="613"/>
        <end position="615"/>
    </location>
</feature>
<feature type="helix" evidence="5">
    <location>
        <begin position="620"/>
        <end position="622"/>
    </location>
</feature>
<feature type="helix" evidence="5">
    <location>
        <begin position="623"/>
        <end position="628"/>
    </location>
</feature>
<feature type="helix" evidence="5">
    <location>
        <begin position="632"/>
        <end position="649"/>
    </location>
</feature>
<feature type="helix" evidence="5">
    <location>
        <begin position="653"/>
        <end position="663"/>
    </location>
</feature>
<feature type="helix" evidence="5">
    <location>
        <begin position="667"/>
        <end position="680"/>
    </location>
</feature>
<feature type="helix" evidence="5">
    <location>
        <begin position="685"/>
        <end position="698"/>
    </location>
</feature>
<feature type="helix" evidence="5">
    <location>
        <begin position="701"/>
        <end position="705"/>
    </location>
</feature>
<feature type="helix" evidence="5">
    <location>
        <begin position="711"/>
        <end position="714"/>
    </location>
</feature>
<feature type="helix" evidence="6">
    <location>
        <begin position="918"/>
        <end position="920"/>
    </location>
</feature>
<feature type="helix" evidence="6">
    <location>
        <begin position="929"/>
        <end position="946"/>
    </location>
</feature>
<feature type="strand" evidence="6">
    <location>
        <begin position="950"/>
        <end position="952"/>
    </location>
</feature>
<feature type="strand" evidence="6">
    <location>
        <begin position="966"/>
        <end position="973"/>
    </location>
</feature>
<feature type="strand" evidence="6">
    <location>
        <begin position="976"/>
        <end position="986"/>
    </location>
</feature>
<feature type="strand" evidence="6">
    <location>
        <begin position="992"/>
        <end position="999"/>
    </location>
</feature>
<feature type="strand" evidence="6">
    <location>
        <begin position="1002"/>
        <end position="1027"/>
    </location>
</feature>
<feature type="strand" evidence="6">
    <location>
        <begin position="1030"/>
        <end position="1043"/>
    </location>
</feature>
<feature type="strand" evidence="6">
    <location>
        <begin position="1056"/>
        <end position="1065"/>
    </location>
</feature>
<feature type="strand" evidence="6">
    <location>
        <begin position="1076"/>
        <end position="1089"/>
    </location>
</feature>
<feature type="strand" evidence="6">
    <location>
        <begin position="1093"/>
        <end position="1098"/>
    </location>
</feature>
<feature type="strand" evidence="6">
    <location>
        <begin position="1103"/>
        <end position="1112"/>
    </location>
</feature>
<feature type="strand" evidence="6">
    <location>
        <begin position="1115"/>
        <end position="1121"/>
    </location>
</feature>
<feature type="strand" evidence="6">
    <location>
        <begin position="1123"/>
        <end position="1125"/>
    </location>
</feature>
<feature type="strand" evidence="6">
    <location>
        <begin position="1130"/>
        <end position="1137"/>
    </location>
</feature>
<feature type="strand" evidence="6">
    <location>
        <begin position="1146"/>
        <end position="1151"/>
    </location>
</feature>
<feature type="strand" evidence="6">
    <location>
        <begin position="1154"/>
        <end position="1160"/>
    </location>
</feature>
<feature type="strand" evidence="6">
    <location>
        <begin position="1168"/>
        <end position="1170"/>
    </location>
</feature>
<feature type="strand" evidence="6">
    <location>
        <begin position="1172"/>
        <end position="1176"/>
    </location>
</feature>
<feature type="strand" evidence="6">
    <location>
        <begin position="1179"/>
        <end position="1182"/>
    </location>
</feature>
<feature type="strand" evidence="6">
    <location>
        <begin position="1187"/>
        <end position="1191"/>
    </location>
</feature>
<feature type="strand" evidence="6">
    <location>
        <begin position="1194"/>
        <end position="1196"/>
    </location>
</feature>
<feature type="strand" evidence="6">
    <location>
        <begin position="1199"/>
        <end position="1206"/>
    </location>
</feature>
<feature type="helix" evidence="6">
    <location>
        <begin position="1210"/>
        <end position="1215"/>
    </location>
</feature>
<feature type="strand" evidence="6">
    <location>
        <begin position="1222"/>
        <end position="1227"/>
    </location>
</feature>
<feature type="strand" evidence="6">
    <location>
        <begin position="1230"/>
        <end position="1235"/>
    </location>
</feature>
<feature type="strand" evidence="6">
    <location>
        <begin position="1242"/>
        <end position="1248"/>
    </location>
</feature>
<feature type="strand" evidence="6">
    <location>
        <begin position="1253"/>
        <end position="1257"/>
    </location>
</feature>
<feature type="strand" evidence="6">
    <location>
        <begin position="1263"/>
        <end position="1271"/>
    </location>
</feature>
<feature type="strand" evidence="6">
    <location>
        <begin position="1273"/>
        <end position="1277"/>
    </location>
</feature>
<feature type="strand" evidence="6">
    <location>
        <begin position="1279"/>
        <end position="1289"/>
    </location>
</feature>
<feature type="strand" evidence="6">
    <location>
        <begin position="1291"/>
        <end position="1308"/>
    </location>
</feature>
<feature type="strand" evidence="6">
    <location>
        <begin position="1314"/>
        <end position="1320"/>
    </location>
</feature>
<feature type="strand" evidence="6">
    <location>
        <begin position="1327"/>
        <end position="1333"/>
    </location>
</feature>
<feature type="strand" evidence="6">
    <location>
        <begin position="1336"/>
        <end position="1344"/>
    </location>
</feature>
<name>GP_BUNL8</name>
<proteinExistence type="evidence at protein level"/>
<organismHost>
    <name type="scientific">Cervidae</name>
    <name type="common">Deer</name>
    <dbReference type="NCBI Taxonomy" id="9850"/>
</organismHost>
<organismHost>
    <name type="scientific">Homo sapiens</name>
    <name type="common">Human</name>
    <dbReference type="NCBI Taxonomy" id="9606"/>
</organismHost>
<organismHost>
    <name type="scientific">Ochlerotatus triseriatus</name>
    <name type="common">Eastern treehole mosquito</name>
    <name type="synonym">Aedes triseriatus</name>
    <dbReference type="NCBI Taxonomy" id="7162"/>
</organismHost>
<organismHost>
    <name type="scientific">Tamias</name>
    <dbReference type="NCBI Taxonomy" id="13712"/>
</organismHost>
<keyword id="KW-0002">3D-structure</keyword>
<keyword id="KW-0325">Glycoprotein</keyword>
<keyword id="KW-1038">Host endoplasmic reticulum</keyword>
<keyword id="KW-1040">Host Golgi apparatus</keyword>
<keyword id="KW-1043">Host membrane</keyword>
<keyword id="KW-0945">Host-virus interaction</keyword>
<keyword id="KW-0472">Membrane</keyword>
<keyword id="KW-1185">Reference proteome</keyword>
<keyword id="KW-0732">Signal</keyword>
<keyword id="KW-0812">Transmembrane</keyword>
<keyword id="KW-1133">Transmembrane helix</keyword>
<keyword id="KW-1161">Viral attachment to host cell</keyword>
<keyword id="KW-0946">Virion</keyword>
<keyword id="KW-1160">Virus entry into host cell</keyword>
<reference key="1">
    <citation type="submission" date="2002-07" db="EMBL/GenBank/DDBJ databases">
        <title>Complete sequence of the Bunyavirus, La Crosse virus, Human/78 strain.</title>
        <authorList>
            <person name="Hughes M.T."/>
            <person name="Kempf B.J."/>
            <person name="Blair C.D."/>
            <person name="Beaty B.J."/>
        </authorList>
    </citation>
    <scope>NUCLEOTIDE SEQUENCE [GENOMIC RNA]</scope>
</reference>
<reference key="2">
    <citation type="journal article" date="2007" name="Virol. J.">
        <title>Genome sequence analysis of La Crosse virus and in vitro and in vivo phenotypes.</title>
        <authorList>
            <person name="Bennett R.S."/>
            <person name="Ton D.R."/>
            <person name="Hanson C.T."/>
            <person name="Murphy B.R."/>
            <person name="Whitehead S.S."/>
        </authorList>
    </citation>
    <scope>NUCLEOTIDE SEQUENCE [GENOMIC RNA]</scope>
</reference>
<reference key="3">
    <citation type="journal article" date="2007" name="Virology">
        <title>Mutagenesis of the La Crosse Virus glycoprotein supports a role for Gc (1066-1087) as the fusion peptide.</title>
        <authorList>
            <person name="Plassmeyer M.L."/>
            <person name="Soldan S.S."/>
            <person name="Stachelek K.M."/>
            <person name="Roth S.M."/>
            <person name="Martin-Garcia J."/>
            <person name="Gonzalez-Scarano F."/>
        </authorList>
    </citation>
    <scope>MUTAGENESIS OF TRP-1066</scope>
</reference>
<protein>
    <recommendedName>
        <fullName>Envelopment polyprotein</fullName>
    </recommendedName>
    <alternativeName>
        <fullName>M polyprotein</fullName>
    </alternativeName>
    <component>
        <recommendedName>
            <fullName>Glycoprotein N</fullName>
            <shortName>Gn</shortName>
        </recommendedName>
        <alternativeName>
            <fullName>Glycoprotein G2</fullName>
        </alternativeName>
    </component>
    <component>
        <recommendedName>
            <fullName>Non-structural protein M</fullName>
            <shortName>NSm</shortName>
        </recommendedName>
    </component>
    <component>
        <recommendedName>
            <fullName>Glycoprotein C</fullName>
            <shortName>Gc</shortName>
        </recommendedName>
        <alternativeName>
            <fullName>Glycoprotein G1</fullName>
        </alternativeName>
    </component>
</protein>
<dbReference type="EMBL" id="AF528166">
    <property type="protein sequence ID" value="AAM94388.1"/>
    <property type="molecule type" value="Genomic_RNA"/>
</dbReference>
<dbReference type="EMBL" id="EF485034">
    <property type="protein sequence ID" value="ABQ12634.1"/>
    <property type="molecule type" value="Viral_cRNA"/>
</dbReference>
<dbReference type="PDB" id="6H3W">
    <property type="method" value="X-ray"/>
    <property type="resolution" value="2.10 A"/>
    <property type="chains" value="A=477-723"/>
</dbReference>
<dbReference type="PDB" id="7A57">
    <property type="method" value="X-ray"/>
    <property type="resolution" value="3.15 A"/>
    <property type="chains" value="A/B/C=918-1364"/>
</dbReference>
<dbReference type="PDBsum" id="6H3W"/>
<dbReference type="PDBsum" id="7A57"/>
<dbReference type="SMR" id="Q8JPR1"/>
<dbReference type="GlyCosmos" id="Q8JPR1">
    <property type="glycosylation" value="3 sites, No reported glycans"/>
</dbReference>
<dbReference type="KEGG" id="vg:956555"/>
<dbReference type="Proteomes" id="UP000008768">
    <property type="component" value="Genome"/>
</dbReference>
<dbReference type="Proteomes" id="UP000121242">
    <property type="component" value="Genome"/>
</dbReference>
<dbReference type="GO" id="GO:0044167">
    <property type="term" value="C:host cell endoplasmic reticulum membrane"/>
    <property type="evidence" value="ECO:0007669"/>
    <property type="project" value="UniProtKB-SubCell"/>
</dbReference>
<dbReference type="GO" id="GO:0044178">
    <property type="term" value="C:host cell Golgi membrane"/>
    <property type="evidence" value="ECO:0007669"/>
    <property type="project" value="UniProtKB-SubCell"/>
</dbReference>
<dbReference type="GO" id="GO:0016020">
    <property type="term" value="C:membrane"/>
    <property type="evidence" value="ECO:0007669"/>
    <property type="project" value="UniProtKB-KW"/>
</dbReference>
<dbReference type="GO" id="GO:0055036">
    <property type="term" value="C:virion membrane"/>
    <property type="evidence" value="ECO:0007669"/>
    <property type="project" value="UniProtKB-SubCell"/>
</dbReference>
<dbReference type="GO" id="GO:0046718">
    <property type="term" value="P:symbiont entry into host cell"/>
    <property type="evidence" value="ECO:0007669"/>
    <property type="project" value="UniProtKB-KW"/>
</dbReference>
<dbReference type="GO" id="GO:0044003">
    <property type="term" value="P:symbiont-mediated perturbation of host process"/>
    <property type="evidence" value="ECO:0007669"/>
    <property type="project" value="InterPro"/>
</dbReference>
<dbReference type="GO" id="GO:0019062">
    <property type="term" value="P:virion attachment to host cell"/>
    <property type="evidence" value="ECO:0007669"/>
    <property type="project" value="UniProtKB-KW"/>
</dbReference>
<dbReference type="InterPro" id="IPR005167">
    <property type="entry name" value="Bunya_G1"/>
</dbReference>
<dbReference type="InterPro" id="IPR005168">
    <property type="entry name" value="Bunya_G2"/>
</dbReference>
<dbReference type="InterPro" id="IPR026400">
    <property type="entry name" value="Bunya_nonstruc_pro_NSm"/>
</dbReference>
<dbReference type="InterPro" id="IPR014413">
    <property type="entry name" value="M_poly_OrthobunV"/>
</dbReference>
<dbReference type="NCBIfam" id="TIGR04210">
    <property type="entry name" value="bunya_NSm"/>
    <property type="match status" value="1"/>
</dbReference>
<dbReference type="Pfam" id="PF03557">
    <property type="entry name" value="Bunya_G1"/>
    <property type="match status" value="1"/>
</dbReference>
<dbReference type="Pfam" id="PF03563">
    <property type="entry name" value="Bunya_G2"/>
    <property type="match status" value="1"/>
</dbReference>
<dbReference type="PIRSF" id="PIRSF003944">
    <property type="entry name" value="M_poly_OrthobunV"/>
    <property type="match status" value="1"/>
</dbReference>
<comment type="function">
    <text evidence="1">Glycoprotein C and glycoprotein N interact with each other and are present at the surface of the virion. They are able to attach the virion to a cell receptor and to promote fusion of membranes after endocytosis of the virion (By similarity).</text>
</comment>
<comment type="subunit">
    <text evidence="1">Glycoprotein C and Glycoprotein N interact with each other.</text>
</comment>
<comment type="subcellular location">
    <molecule>Glycoprotein C</molecule>
    <subcellularLocation>
        <location evidence="4">Virion membrane</location>
        <topology evidence="4">Single-pass type I membrane protein</topology>
    </subcellularLocation>
    <subcellularLocation>
        <location evidence="4">Host Golgi apparatus membrane</location>
        <topology evidence="4">Single-pass type I membrane protein</topology>
    </subcellularLocation>
    <subcellularLocation>
        <location evidence="4">Host endoplasmic reticulum membrane</location>
        <topology evidence="4">Single-pass type I membrane protein</topology>
    </subcellularLocation>
    <text evidence="1">Glycoprotein C alone is retained in the membrane of the endoplasmic reticulum, but not transported to the Golgi. Coexpression of Glycoprotein C and Glycoprotein N results in efficient transport of Glycoprotein C to the Golgi complex, indicating that their interaction is essential for proper targeting to this organelle, where virion budding occurs (By similarity).</text>
</comment>
<comment type="subcellular location">
    <molecule>Glycoprotein N</molecule>
    <subcellularLocation>
        <location evidence="4">Virion membrane</location>
        <topology evidence="4">Single-pass type I membrane protein</topology>
    </subcellularLocation>
    <subcellularLocation>
        <location evidence="4">Host Golgi apparatus membrane</location>
        <topology evidence="4">Single-pass type I membrane protein</topology>
    </subcellularLocation>
    <text evidence="1">Glycoprotein N is retained in the Golgi complex through a Golgi retention signal, which resides in the Glycoprotein N transmembrane region.</text>
</comment>
<comment type="subcellular location">
    <molecule>Non-structural protein M</molecule>
    <subcellularLocation>
        <location evidence="4">Host Golgi apparatus membrane</location>
        <topology evidence="4">Multi-pass membrane protein</topology>
    </subcellularLocation>
</comment>
<comment type="similarity">
    <text evidence="4">Belongs to the orthobunyaviruses M polyprotein family.</text>
</comment>
<evidence type="ECO:0000250" key="1"/>
<evidence type="ECO:0000255" key="2"/>
<evidence type="ECO:0000269" key="3">
    <source>
    </source>
</evidence>
<evidence type="ECO:0000305" key="4"/>
<evidence type="ECO:0007829" key="5">
    <source>
        <dbReference type="PDB" id="6H3W"/>
    </source>
</evidence>
<evidence type="ECO:0007829" key="6">
    <source>
        <dbReference type="PDB" id="7A57"/>
    </source>
</evidence>
<sequence>MICILVLITVAAASPVYQRCFQDGAIVKQNPSKEAVTEVCLKDDVSMIKTEARYVRNATGVFSNNVAIRKWLVSDWHDCRPKKIVGGHINVIEVGDDLSLHTESYVCSADCTIGVDKETAQVRLQTDTTNHFEIAGTTVKSGWFKSTTYITLDQTCEHLKVSCGPKSVQFHACFNQHMSCVRFLHRTILPGSIANSICQNIEIIILVTLTLLIFILLSILSKTYICYLLMPIFIPIAYIYGIIYNKSCKKCKLCGLVYHPFTECGTHCVCGARYDTSDRMKLHRASGLCPGYKSLRAARVMCKSKGPASILSIITAVLVLTFVTPINSMVLGESKETFELEDLPDDMLEMASRINSYYLTCILNYAVSWGLVIIGLLIGLLFKKYQHRFLNVYAMYCEECDMYHDKSGLKRHGDFTNKCRQCTCGQYEDAAGLMAHRKTYNCLVQYKAKWMMNFLIIYIFLILIKDSAIVVQAAGTDFTTCLETESINWNCTGPFLNLGNCQKQQKKEPYTNIATQLKGLKAISVLDVPIITGIPDDIAGALRYIEEKEDFHVQLTIEYAMLSKYCDYYTQFSDNSGYSQTTWRVYLRSHDFEACILYPNQHFCRCVKNGEKCSSSNWDFANEMKDYYSGKQTKFDKDLNLALTALHHAFRGTSSAYIATMLSKKSNDDLIAYTNKIKTKFPGNALLKAIIDYIAYMKSLPGMANFKYDEFWDELLYKPNPAKASNLARGKESSYNFKLAISSKSIKTCKNVKDVACLSPRSGAIYASIIACGEPNGPSVYRKPSGGVFQSSTDRSIYCLLDSHCLEEFEAIGQEELDAVKKSKCWEIEYPDVKLIQEGDGTKSCRMKDSGNCNVATNRWPVIQCENDKFYYSELQKDYDKAQDIGHYCLSPGCTTVRYPINPKHISNCNWQVSRSSIAKIDVHNIEDIEQYKKAITQKLQTSLSLFKYAKTKNLPHIKPIYKYITIEGTETAEGIESAYIESEVPALAGTSIGFKINSKEGKHLLDVIAYVKSASYSSVYTKLYSTGPTSGINTKHDELCTGPCPANINHQVGWLTFARERTSSWGCEEFGCLAVSDGCVFGSCQDIIKEELSVYRKETEEVTDVELCLTFSDKTYCTNLNPVTPIITDLFEVQFKTVETYSLPRIVAVQNHEIKIGQINDLGVYSKGCGNVQKVNGTIYGNGVPRFDYLCHLASRKEVIVRKCFDNDYQACKFLQSPASYRLEEDSGTVTIIDYKKILGTIKMKAILGDVKYKTFADSVDITAEGSCTGCINCFENIHCELTLHTTIEASCPIKSSCTVFHDRILVTPNEHKYALKMVCTEKPGNTLTIKVCNTKVEASMALVDAKPIIELAPVDQTAYIREKDERCKTWMCRVRDEGLQVILEPFKNLFGSYIGIFYTFIISIVVLLVIIYVLLPICFKLRDTLRKHEDAYKREMKIR</sequence>
<gene>
    <name type="primary">GP</name>
</gene>